<keyword id="KW-0067">ATP-binding</keyword>
<keyword id="KW-0547">Nucleotide-binding</keyword>
<keyword id="KW-1185">Reference proteome</keyword>
<comment type="similarity">
    <text evidence="2">Belongs to the archaeal ATPase family.</text>
</comment>
<gene>
    <name type="ordered locus">MJ1609</name>
</gene>
<sequence length="374" mass="43985">MKFFNREKEINKILSIIEGEPNNIYFIYGSLNSGKSTLMREIVVNRLDISKYIPFFIDFRTRNILNVDNFIECLFEVDEKSEIDDFREYAKSLADLLVKGSEEISKYYLGMPIKIPKPFFDKIFNKKDKSADVYQYIEYLFAKLNEKGKKPILIFDELQMIKEITLNGNRKLLWSLFQFLVALTKVQHLCHVFCLSSDSLFIEYVYKTGELEGRADYILVDDFDKQTALKFIDFLAKEILNKKLPKDEKELIYSYVGGKPVLIIKVIDKLRYENLNDILDFMLKDATQKLKYFLNDLDYIKPKVEVGDEVIELKKEDIVKALKLFKDSYEISDSEVAKPIYVYLVKKNILFLNPIEGILKPQSFLIWNAIKRLL</sequence>
<reference key="1">
    <citation type="journal article" date="1996" name="Science">
        <title>Complete genome sequence of the methanogenic archaeon, Methanococcus jannaschii.</title>
        <authorList>
            <person name="Bult C.J."/>
            <person name="White O."/>
            <person name="Olsen G.J."/>
            <person name="Zhou L."/>
            <person name="Fleischmann R.D."/>
            <person name="Sutton G.G."/>
            <person name="Blake J.A."/>
            <person name="FitzGerald L.M."/>
            <person name="Clayton R.A."/>
            <person name="Gocayne J.D."/>
            <person name="Kerlavage A.R."/>
            <person name="Dougherty B.A."/>
            <person name="Tomb J.-F."/>
            <person name="Adams M.D."/>
            <person name="Reich C.I."/>
            <person name="Overbeek R."/>
            <person name="Kirkness E.F."/>
            <person name="Weinstock K.G."/>
            <person name="Merrick J.M."/>
            <person name="Glodek A."/>
            <person name="Scott J.L."/>
            <person name="Geoghagen N.S.M."/>
            <person name="Weidman J.F."/>
            <person name="Fuhrmann J.L."/>
            <person name="Nguyen D."/>
            <person name="Utterback T.R."/>
            <person name="Kelley J.M."/>
            <person name="Peterson J.D."/>
            <person name="Sadow P.W."/>
            <person name="Hanna M.C."/>
            <person name="Cotton M.D."/>
            <person name="Roberts K.M."/>
            <person name="Hurst M.A."/>
            <person name="Kaine B.P."/>
            <person name="Borodovsky M."/>
            <person name="Klenk H.-P."/>
            <person name="Fraser C.M."/>
            <person name="Smith H.O."/>
            <person name="Woese C.R."/>
            <person name="Venter J.C."/>
        </authorList>
    </citation>
    <scope>NUCLEOTIDE SEQUENCE [LARGE SCALE GENOMIC DNA]</scope>
    <source>
        <strain>ATCC 43067 / DSM 2661 / JAL-1 / JCM 10045 / NBRC 100440</strain>
    </source>
</reference>
<reference key="2">
    <citation type="journal article" date="1997" name="Science">
        <title>Evidence for a family of archaeal ATPases.</title>
        <authorList>
            <person name="Koonin E.V."/>
        </authorList>
    </citation>
    <scope>SIMILARITY</scope>
</reference>
<dbReference type="EMBL" id="L77117">
    <property type="protein sequence ID" value="AAB99636.1"/>
    <property type="molecule type" value="Genomic_DNA"/>
</dbReference>
<dbReference type="PIR" id="H64500">
    <property type="entry name" value="H64500"/>
</dbReference>
<dbReference type="RefSeq" id="WP_010871134.1">
    <property type="nucleotide sequence ID" value="NC_000909.1"/>
</dbReference>
<dbReference type="SMR" id="Q59004"/>
<dbReference type="STRING" id="243232.MJ_1609"/>
<dbReference type="PaxDb" id="243232-MJ_1609"/>
<dbReference type="EnsemblBacteria" id="AAB99636">
    <property type="protein sequence ID" value="AAB99636"/>
    <property type="gene ID" value="MJ_1609"/>
</dbReference>
<dbReference type="GeneID" id="1452518"/>
<dbReference type="KEGG" id="mja:MJ_1609"/>
<dbReference type="eggNOG" id="arCOG03407">
    <property type="taxonomic scope" value="Archaea"/>
</dbReference>
<dbReference type="HOGENOM" id="CLU_068608_0_0_2"/>
<dbReference type="InParanoid" id="Q59004"/>
<dbReference type="OrthoDB" id="65550at2157"/>
<dbReference type="PhylomeDB" id="Q59004"/>
<dbReference type="Proteomes" id="UP000000805">
    <property type="component" value="Chromosome"/>
</dbReference>
<dbReference type="GO" id="GO:0005524">
    <property type="term" value="F:ATP binding"/>
    <property type="evidence" value="ECO:0007669"/>
    <property type="project" value="UniProtKB-KW"/>
</dbReference>
<dbReference type="Gene3D" id="3.40.50.300">
    <property type="entry name" value="P-loop containing nucleotide triphosphate hydrolases"/>
    <property type="match status" value="1"/>
</dbReference>
<dbReference type="Gene3D" id="1.10.10.10">
    <property type="entry name" value="Winged helix-like DNA-binding domain superfamily/Winged helix DNA-binding domain"/>
    <property type="match status" value="1"/>
</dbReference>
<dbReference type="InterPro" id="IPR051667">
    <property type="entry name" value="Archaeal_ATPase_domain"/>
</dbReference>
<dbReference type="InterPro" id="IPR011579">
    <property type="entry name" value="ATPase_dom"/>
</dbReference>
<dbReference type="InterPro" id="IPR049081">
    <property type="entry name" value="MJ1010-like_2nd"/>
</dbReference>
<dbReference type="InterPro" id="IPR027417">
    <property type="entry name" value="P-loop_NTPase"/>
</dbReference>
<dbReference type="InterPro" id="IPR036388">
    <property type="entry name" value="WH-like_DNA-bd_sf"/>
</dbReference>
<dbReference type="PANTHER" id="PTHR37096:SF1">
    <property type="entry name" value="AAA+ ATPASE DOMAIN-CONTAINING PROTEIN"/>
    <property type="match status" value="1"/>
</dbReference>
<dbReference type="PANTHER" id="PTHR37096">
    <property type="entry name" value="YALI0E33429P"/>
    <property type="match status" value="1"/>
</dbReference>
<dbReference type="Pfam" id="PF01637">
    <property type="entry name" value="ATPase_2"/>
    <property type="match status" value="1"/>
</dbReference>
<dbReference type="Pfam" id="PF21690">
    <property type="entry name" value="MJ1010-like_2nd"/>
    <property type="match status" value="1"/>
</dbReference>
<dbReference type="SUPFAM" id="SSF52540">
    <property type="entry name" value="P-loop containing nucleoside triphosphate hydrolases"/>
    <property type="match status" value="1"/>
</dbReference>
<evidence type="ECO:0000255" key="1"/>
<evidence type="ECO:0000305" key="2"/>
<accession>Q59004</accession>
<feature type="chain" id="PRO_0000184676" description="Uncharacterized ATP-binding protein MJ1609">
    <location>
        <begin position="1"/>
        <end position="374"/>
    </location>
</feature>
<feature type="binding site" evidence="1">
    <location>
        <begin position="29"/>
        <end position="36"/>
    </location>
    <ligand>
        <name>ATP</name>
        <dbReference type="ChEBI" id="CHEBI:30616"/>
    </ligand>
</feature>
<protein>
    <recommendedName>
        <fullName>Uncharacterized ATP-binding protein MJ1609</fullName>
    </recommendedName>
</protein>
<proteinExistence type="inferred from homology"/>
<name>Y1609_METJA</name>
<organism>
    <name type="scientific">Methanocaldococcus jannaschii (strain ATCC 43067 / DSM 2661 / JAL-1 / JCM 10045 / NBRC 100440)</name>
    <name type="common">Methanococcus jannaschii</name>
    <dbReference type="NCBI Taxonomy" id="243232"/>
    <lineage>
        <taxon>Archaea</taxon>
        <taxon>Methanobacteriati</taxon>
        <taxon>Methanobacteriota</taxon>
        <taxon>Methanomada group</taxon>
        <taxon>Methanococci</taxon>
        <taxon>Methanococcales</taxon>
        <taxon>Methanocaldococcaceae</taxon>
        <taxon>Methanocaldococcus</taxon>
    </lineage>
</organism>